<protein>
    <recommendedName>
        <fullName evidence="1">Protoheme IX farnesyltransferase</fullName>
        <ecNumber evidence="1">2.5.1.141</ecNumber>
    </recommendedName>
    <alternativeName>
        <fullName evidence="1">Heme B farnesyltransferase</fullName>
    </alternativeName>
    <alternativeName>
        <fullName evidence="1">Heme O synthase</fullName>
    </alternativeName>
</protein>
<comment type="function">
    <text evidence="1">Converts heme B (protoheme IX) to heme O by substitution of the vinyl group on carbon 2 of heme B porphyrin ring with a hydroxyethyl farnesyl side group.</text>
</comment>
<comment type="catalytic activity">
    <reaction evidence="1">
        <text>heme b + (2E,6E)-farnesyl diphosphate + H2O = Fe(II)-heme o + diphosphate</text>
        <dbReference type="Rhea" id="RHEA:28070"/>
        <dbReference type="ChEBI" id="CHEBI:15377"/>
        <dbReference type="ChEBI" id="CHEBI:33019"/>
        <dbReference type="ChEBI" id="CHEBI:60344"/>
        <dbReference type="ChEBI" id="CHEBI:60530"/>
        <dbReference type="ChEBI" id="CHEBI:175763"/>
        <dbReference type="EC" id="2.5.1.141"/>
    </reaction>
</comment>
<comment type="pathway">
    <text evidence="1">Porphyrin-containing compound metabolism; heme O biosynthesis; heme O from protoheme: step 1/1.</text>
</comment>
<comment type="subcellular location">
    <subcellularLocation>
        <location evidence="1">Cell inner membrane</location>
        <topology evidence="1">Multi-pass membrane protein</topology>
    </subcellularLocation>
</comment>
<comment type="miscellaneous">
    <text evidence="1">Carbon 2 of the heme B porphyrin ring is defined according to the Fischer nomenclature.</text>
</comment>
<comment type="similarity">
    <text evidence="1">Belongs to the UbiA prenyltransferase family. Protoheme IX farnesyltransferase subfamily.</text>
</comment>
<name>COXX_BURM9</name>
<keyword id="KW-0997">Cell inner membrane</keyword>
<keyword id="KW-1003">Cell membrane</keyword>
<keyword id="KW-0350">Heme biosynthesis</keyword>
<keyword id="KW-0472">Membrane</keyword>
<keyword id="KW-0808">Transferase</keyword>
<keyword id="KW-0812">Transmembrane</keyword>
<keyword id="KW-1133">Transmembrane helix</keyword>
<organism>
    <name type="scientific">Burkholderia mallei (strain NCTC 10229)</name>
    <dbReference type="NCBI Taxonomy" id="412022"/>
    <lineage>
        <taxon>Bacteria</taxon>
        <taxon>Pseudomonadati</taxon>
        <taxon>Pseudomonadota</taxon>
        <taxon>Betaproteobacteria</taxon>
        <taxon>Burkholderiales</taxon>
        <taxon>Burkholderiaceae</taxon>
        <taxon>Burkholderia</taxon>
        <taxon>pseudomallei group</taxon>
    </lineage>
</organism>
<accession>A2S646</accession>
<dbReference type="EC" id="2.5.1.141" evidence="1"/>
<dbReference type="EMBL" id="CP000546">
    <property type="protein sequence ID" value="ABN01857.1"/>
    <property type="molecule type" value="Genomic_DNA"/>
</dbReference>
<dbReference type="SMR" id="A2S646"/>
<dbReference type="KEGG" id="bml:BMA10229_A1432"/>
<dbReference type="HOGENOM" id="CLU_029631_0_2_4"/>
<dbReference type="UniPathway" id="UPA00834">
    <property type="reaction ID" value="UER00712"/>
</dbReference>
<dbReference type="Proteomes" id="UP000002283">
    <property type="component" value="Chromosome I"/>
</dbReference>
<dbReference type="GO" id="GO:0005886">
    <property type="term" value="C:plasma membrane"/>
    <property type="evidence" value="ECO:0007669"/>
    <property type="project" value="UniProtKB-SubCell"/>
</dbReference>
<dbReference type="GO" id="GO:0008495">
    <property type="term" value="F:protoheme IX farnesyltransferase activity"/>
    <property type="evidence" value="ECO:0007669"/>
    <property type="project" value="UniProtKB-UniRule"/>
</dbReference>
<dbReference type="GO" id="GO:0048034">
    <property type="term" value="P:heme O biosynthetic process"/>
    <property type="evidence" value="ECO:0007669"/>
    <property type="project" value="UniProtKB-UniRule"/>
</dbReference>
<dbReference type="CDD" id="cd13957">
    <property type="entry name" value="PT_UbiA_Cox10"/>
    <property type="match status" value="1"/>
</dbReference>
<dbReference type="Gene3D" id="1.10.357.140">
    <property type="entry name" value="UbiA prenyltransferase"/>
    <property type="match status" value="1"/>
</dbReference>
<dbReference type="HAMAP" id="MF_00154">
    <property type="entry name" value="CyoE_CtaB"/>
    <property type="match status" value="1"/>
</dbReference>
<dbReference type="InterPro" id="IPR006369">
    <property type="entry name" value="Protohaem_IX_farnesylTrfase"/>
</dbReference>
<dbReference type="InterPro" id="IPR000537">
    <property type="entry name" value="UbiA_prenyltransferase"/>
</dbReference>
<dbReference type="InterPro" id="IPR030470">
    <property type="entry name" value="UbiA_prenylTrfase_CS"/>
</dbReference>
<dbReference type="InterPro" id="IPR044878">
    <property type="entry name" value="UbiA_sf"/>
</dbReference>
<dbReference type="NCBIfam" id="TIGR01473">
    <property type="entry name" value="cyoE_ctaB"/>
    <property type="match status" value="1"/>
</dbReference>
<dbReference type="NCBIfam" id="NF003349">
    <property type="entry name" value="PRK04375.1-2"/>
    <property type="match status" value="1"/>
</dbReference>
<dbReference type="PANTHER" id="PTHR43448:SF7">
    <property type="entry name" value="4-HYDROXYBENZOATE SOLANESYLTRANSFERASE"/>
    <property type="match status" value="1"/>
</dbReference>
<dbReference type="PANTHER" id="PTHR43448">
    <property type="entry name" value="PROTOHEME IX FARNESYLTRANSFERASE, MITOCHONDRIAL"/>
    <property type="match status" value="1"/>
</dbReference>
<dbReference type="Pfam" id="PF01040">
    <property type="entry name" value="UbiA"/>
    <property type="match status" value="1"/>
</dbReference>
<dbReference type="PROSITE" id="PS00943">
    <property type="entry name" value="UBIA"/>
    <property type="match status" value="1"/>
</dbReference>
<evidence type="ECO:0000255" key="1">
    <source>
        <dbReference type="HAMAP-Rule" id="MF_00154"/>
    </source>
</evidence>
<proteinExistence type="inferred from homology"/>
<feature type="chain" id="PRO_0000327025" description="Protoheme IX farnesyltransferase">
    <location>
        <begin position="1"/>
        <end position="300"/>
    </location>
</feature>
<feature type="transmembrane region" description="Helical" evidence="1">
    <location>
        <begin position="24"/>
        <end position="44"/>
    </location>
</feature>
<feature type="transmembrane region" description="Helical" evidence="1">
    <location>
        <begin position="48"/>
        <end position="68"/>
    </location>
</feature>
<feature type="transmembrane region" description="Helical" evidence="1">
    <location>
        <begin position="94"/>
        <end position="114"/>
    </location>
</feature>
<feature type="transmembrane region" description="Helical" evidence="1">
    <location>
        <begin position="118"/>
        <end position="138"/>
    </location>
</feature>
<feature type="transmembrane region" description="Helical" evidence="1">
    <location>
        <begin position="146"/>
        <end position="166"/>
    </location>
</feature>
<feature type="transmembrane region" description="Helical" evidence="1">
    <location>
        <begin position="172"/>
        <end position="192"/>
    </location>
</feature>
<feature type="transmembrane region" description="Helical" evidence="1">
    <location>
        <begin position="217"/>
        <end position="237"/>
    </location>
</feature>
<feature type="transmembrane region" description="Helical" evidence="1">
    <location>
        <begin position="239"/>
        <end position="259"/>
    </location>
</feature>
<feature type="transmembrane region" description="Helical" evidence="1">
    <location>
        <begin position="278"/>
        <end position="298"/>
    </location>
</feature>
<reference key="1">
    <citation type="journal article" date="2010" name="Genome Biol. Evol.">
        <title>Continuing evolution of Burkholderia mallei through genome reduction and large-scale rearrangements.</title>
        <authorList>
            <person name="Losada L."/>
            <person name="Ronning C.M."/>
            <person name="DeShazer D."/>
            <person name="Woods D."/>
            <person name="Fedorova N."/>
            <person name="Kim H.S."/>
            <person name="Shabalina S.A."/>
            <person name="Pearson T.R."/>
            <person name="Brinkac L."/>
            <person name="Tan P."/>
            <person name="Nandi T."/>
            <person name="Crabtree J."/>
            <person name="Badger J."/>
            <person name="Beckstrom-Sternberg S."/>
            <person name="Saqib M."/>
            <person name="Schutzer S.E."/>
            <person name="Keim P."/>
            <person name="Nierman W.C."/>
        </authorList>
    </citation>
    <scope>NUCLEOTIDE SEQUENCE [LARGE SCALE GENOMIC DNA]</scope>
    <source>
        <strain>NCTC 10229</strain>
    </source>
</reference>
<gene>
    <name evidence="1" type="primary">ctaB</name>
    <name type="ordered locus">BMA10229_A1432</name>
</gene>
<sequence>MDTTLSHTPGSRLSQYLALTKPRVTQLAVFCAVIGMFLATPGMVPWKVLLGGTIGIGLLAGSAFAINCLVEQKIDAMMRRTAWRPSARGEITTLQILAFSTVLGGLGAWTLYTFTNPLTIWLTIATFVGYAVIYTLLLKPMTPQNIVIGGASGAMPPALGWAAVTGAVPGDAWILVLIIFVWTPPHFWVLALYRRKDYENAGLPMLPVTHGEQFTRLHILLYTVILFAVTMMPFISGMSGAVYLTSAVLLGALFLAYAWKIYRDYSDALARRAFRYSIVYLSLLFAALLVDHYARPVIGM</sequence>